<dbReference type="EMBL" id="CP001176">
    <property type="protein sequence ID" value="ACK63672.1"/>
    <property type="molecule type" value="Genomic_DNA"/>
</dbReference>
<dbReference type="RefSeq" id="WP_000559169.1">
    <property type="nucleotide sequence ID" value="NZ_VEHB01000027.1"/>
</dbReference>
<dbReference type="SMR" id="B7HIJ3"/>
<dbReference type="GeneID" id="93011050"/>
<dbReference type="KEGG" id="bcb:BCB4264_A0026"/>
<dbReference type="HOGENOM" id="CLU_060739_1_0_9"/>
<dbReference type="Proteomes" id="UP000007096">
    <property type="component" value="Chromosome"/>
</dbReference>
<dbReference type="GO" id="GO:0003677">
    <property type="term" value="F:DNA binding"/>
    <property type="evidence" value="ECO:0007669"/>
    <property type="project" value="UniProtKB-UniRule"/>
</dbReference>
<dbReference type="GO" id="GO:0008270">
    <property type="term" value="F:zinc ion binding"/>
    <property type="evidence" value="ECO:0007669"/>
    <property type="project" value="UniProtKB-KW"/>
</dbReference>
<dbReference type="GO" id="GO:0006310">
    <property type="term" value="P:DNA recombination"/>
    <property type="evidence" value="ECO:0007669"/>
    <property type="project" value="UniProtKB-UniRule"/>
</dbReference>
<dbReference type="GO" id="GO:0006281">
    <property type="term" value="P:DNA repair"/>
    <property type="evidence" value="ECO:0007669"/>
    <property type="project" value="UniProtKB-UniRule"/>
</dbReference>
<dbReference type="CDD" id="cd01025">
    <property type="entry name" value="TOPRIM_recR"/>
    <property type="match status" value="1"/>
</dbReference>
<dbReference type="Gene3D" id="3.30.60.80">
    <property type="match status" value="1"/>
</dbReference>
<dbReference type="Gene3D" id="3.40.1360.10">
    <property type="match status" value="1"/>
</dbReference>
<dbReference type="Gene3D" id="6.10.250.240">
    <property type="match status" value="1"/>
</dbReference>
<dbReference type="Gene3D" id="1.10.8.420">
    <property type="entry name" value="RecR Domain 1"/>
    <property type="match status" value="1"/>
</dbReference>
<dbReference type="HAMAP" id="MF_00017">
    <property type="entry name" value="RecR"/>
    <property type="match status" value="1"/>
</dbReference>
<dbReference type="InterPro" id="IPR000093">
    <property type="entry name" value="DNA_Rcmb_RecR"/>
</dbReference>
<dbReference type="InterPro" id="IPR023627">
    <property type="entry name" value="Rcmb_RecR"/>
</dbReference>
<dbReference type="InterPro" id="IPR015967">
    <property type="entry name" value="Rcmb_RecR_Znf"/>
</dbReference>
<dbReference type="InterPro" id="IPR006171">
    <property type="entry name" value="TOPRIM_dom"/>
</dbReference>
<dbReference type="InterPro" id="IPR034137">
    <property type="entry name" value="TOPRIM_RecR"/>
</dbReference>
<dbReference type="NCBIfam" id="TIGR00615">
    <property type="entry name" value="recR"/>
    <property type="match status" value="1"/>
</dbReference>
<dbReference type="PANTHER" id="PTHR30446">
    <property type="entry name" value="RECOMBINATION PROTEIN RECR"/>
    <property type="match status" value="1"/>
</dbReference>
<dbReference type="PANTHER" id="PTHR30446:SF0">
    <property type="entry name" value="RECOMBINATION PROTEIN RECR"/>
    <property type="match status" value="1"/>
</dbReference>
<dbReference type="Pfam" id="PF21175">
    <property type="entry name" value="RecR_C"/>
    <property type="match status" value="1"/>
</dbReference>
<dbReference type="Pfam" id="PF21176">
    <property type="entry name" value="RecR_HhH"/>
    <property type="match status" value="1"/>
</dbReference>
<dbReference type="Pfam" id="PF02132">
    <property type="entry name" value="RecR_ZnF"/>
    <property type="match status" value="1"/>
</dbReference>
<dbReference type="Pfam" id="PF13662">
    <property type="entry name" value="Toprim_4"/>
    <property type="match status" value="1"/>
</dbReference>
<dbReference type="SMART" id="SM00493">
    <property type="entry name" value="TOPRIM"/>
    <property type="match status" value="1"/>
</dbReference>
<dbReference type="SUPFAM" id="SSF111304">
    <property type="entry name" value="Recombination protein RecR"/>
    <property type="match status" value="1"/>
</dbReference>
<dbReference type="PROSITE" id="PS01300">
    <property type="entry name" value="RECR"/>
    <property type="match status" value="1"/>
</dbReference>
<dbReference type="PROSITE" id="PS50880">
    <property type="entry name" value="TOPRIM"/>
    <property type="match status" value="1"/>
</dbReference>
<protein>
    <recommendedName>
        <fullName evidence="1">Recombination protein RecR</fullName>
    </recommendedName>
</protein>
<reference key="1">
    <citation type="submission" date="2008-10" db="EMBL/GenBank/DDBJ databases">
        <title>Genome sequence of Bacillus cereus B4264.</title>
        <authorList>
            <person name="Dodson R.J."/>
            <person name="Durkin A.S."/>
            <person name="Rosovitz M.J."/>
            <person name="Rasko D.A."/>
            <person name="Hoffmaster A."/>
            <person name="Ravel J."/>
            <person name="Sutton G."/>
        </authorList>
    </citation>
    <scope>NUCLEOTIDE SEQUENCE [LARGE SCALE GENOMIC DNA]</scope>
    <source>
        <strain>B4264</strain>
    </source>
</reference>
<sequence length="198" mass="21976">MHYPEPISKLIDSFMKLPGIGPKTAVRLAFFVLDMKEDDVLGFAKALVNAKRDLAYCSVCGHITDRDPCYICNDSHRDQSVVCVVQEPKDVIAMEKMKEYQGVYHVLRGAISPMEGIGPEDINIPQLLKRLHDETVQEVILATNPNIEGEATAMYISRLLKPTGIKVTRIAHGLPVGGDLEYADEVTLSKALEGRREV</sequence>
<keyword id="KW-0227">DNA damage</keyword>
<keyword id="KW-0233">DNA recombination</keyword>
<keyword id="KW-0234">DNA repair</keyword>
<keyword id="KW-0479">Metal-binding</keyword>
<keyword id="KW-0862">Zinc</keyword>
<keyword id="KW-0863">Zinc-finger</keyword>
<name>RECR_BACC4</name>
<evidence type="ECO:0000255" key="1">
    <source>
        <dbReference type="HAMAP-Rule" id="MF_00017"/>
    </source>
</evidence>
<organism>
    <name type="scientific">Bacillus cereus (strain B4264)</name>
    <dbReference type="NCBI Taxonomy" id="405532"/>
    <lineage>
        <taxon>Bacteria</taxon>
        <taxon>Bacillati</taxon>
        <taxon>Bacillota</taxon>
        <taxon>Bacilli</taxon>
        <taxon>Bacillales</taxon>
        <taxon>Bacillaceae</taxon>
        <taxon>Bacillus</taxon>
        <taxon>Bacillus cereus group</taxon>
    </lineage>
</organism>
<accession>B7HIJ3</accession>
<comment type="function">
    <text evidence="1">May play a role in DNA repair. It seems to be involved in an RecBC-independent recombinational process of DNA repair. It may act with RecF and RecO.</text>
</comment>
<comment type="similarity">
    <text evidence="1">Belongs to the RecR family.</text>
</comment>
<gene>
    <name evidence="1" type="primary">recR</name>
    <name type="ordered locus">BCB4264_A0026</name>
</gene>
<proteinExistence type="inferred from homology"/>
<feature type="chain" id="PRO_1000195362" description="Recombination protein RecR">
    <location>
        <begin position="1"/>
        <end position="198"/>
    </location>
</feature>
<feature type="domain" description="Toprim" evidence="1">
    <location>
        <begin position="80"/>
        <end position="175"/>
    </location>
</feature>
<feature type="zinc finger region" description="C4-type" evidence="1">
    <location>
        <begin position="57"/>
        <end position="72"/>
    </location>
</feature>